<proteinExistence type="evidence at protein level"/>
<gene>
    <name type="primary">cheF1</name>
    <name type="ordered locus">OE_2402F</name>
</gene>
<accession>B0R4J3</accession>
<name>CHEF1_HALS3</name>
<feature type="chain" id="PRO_0000429071" description="Taxis protein CheF1">
    <location>
        <begin position="1"/>
        <end position="290"/>
    </location>
</feature>
<evidence type="ECO:0000269" key="1">
    <source>
    </source>
</evidence>
<reference key="1">
    <citation type="journal article" date="2008" name="Genomics">
        <title>Evolution in the laboratory: the genome of Halobacterium salinarum strain R1 compared to that of strain NRC-1.</title>
        <authorList>
            <person name="Pfeiffer F."/>
            <person name="Schuster S.C."/>
            <person name="Broicher A."/>
            <person name="Falb M."/>
            <person name="Palm P."/>
            <person name="Rodewald K."/>
            <person name="Ruepp A."/>
            <person name="Soppa J."/>
            <person name="Tittor J."/>
            <person name="Oesterhelt D."/>
        </authorList>
    </citation>
    <scope>NUCLEOTIDE SEQUENCE [LARGE SCALE GENOMIC DNA]</scope>
    <source>
        <strain>ATCC 29341 / DSM 671 / R1</strain>
    </source>
</reference>
<reference key="2">
    <citation type="journal article" date="2009" name="BMC Microbiol.">
        <title>Identification of Archaea-specific chemotaxis proteins which interact with the flagellar apparatus.</title>
        <authorList>
            <person name="Schlesner M."/>
            <person name="Miller A."/>
            <person name="Streif S."/>
            <person name="Staudinger W.F."/>
            <person name="Muller J."/>
            <person name="Scheffer B."/>
            <person name="Siedler F."/>
            <person name="Oesterhelt D."/>
        </authorList>
    </citation>
    <scope>FUNCTION</scope>
    <scope>INTERACTION WITH CHE AND FLA PROTEINS</scope>
    <scope>DISRUPTION PHENOTYPE</scope>
    <scope>GENE NAME</scope>
    <source>
        <strain>ATCC 29341 / DSM 671 / R1</strain>
    </source>
</reference>
<sequence>MSESEYKIADGSGKFLQAVKDGRRMKDAQWSKGRILLSNKRIVLAGSEGKRNLPLSEVQGLSGRHDVNQTVAKVGNYVSIRMTNESVMLVSLGDNTETFESKLYGALLDQTELQVKHPAVEGGVVTDEQFERARIKVDESELSVAMSNGSFVSVELDDVGSAEAASLEVNGDTKPVLKVEHTVNRDTSVQTYFATDSHTASILESLLTKEAEKSQGSVELSETEKRVLMALYSGVSSFEIPDFLGMDVDEVESIFERLIEVDVLEEVRKRREVTMKTRGRNIASEAINEE</sequence>
<protein>
    <recommendedName>
        <fullName>Taxis protein CheF1</fullName>
    </recommendedName>
</protein>
<comment type="function">
    <text evidence="1">Involved in taxis signal transduction. Essential for the ability to control the direction of flagellar rotation. May have a role between CheY and the flagellum.</text>
</comment>
<comment type="subunit">
    <text evidence="1">Interacts with chemotaxis (Che) proteins as well as flagella accessory (Fla) proteins.</text>
</comment>
<comment type="disruption phenotype">
    <text evidence="1">Mutants are unable to switch the direction of flagellar rotation. Flagella rotate only clockwise, resulting in exclusively forward swimming cells that are unable to respond to tactic signals.</text>
</comment>
<dbReference type="EMBL" id="AM774415">
    <property type="protein sequence ID" value="CAP13658.1"/>
    <property type="molecule type" value="Genomic_DNA"/>
</dbReference>
<dbReference type="RefSeq" id="WP_010902684.1">
    <property type="nucleotide sequence ID" value="NC_010364.1"/>
</dbReference>
<dbReference type="SMR" id="B0R4J3"/>
<dbReference type="EnsemblBacteria" id="CAP13658">
    <property type="protein sequence ID" value="CAP13658"/>
    <property type="gene ID" value="OE_2402F"/>
</dbReference>
<dbReference type="GeneID" id="89349357"/>
<dbReference type="KEGG" id="hsl:OE_2402F"/>
<dbReference type="HOGENOM" id="CLU_968406_0_0_2"/>
<dbReference type="PhylomeDB" id="B0R4J3"/>
<dbReference type="Proteomes" id="UP000001321">
    <property type="component" value="Chromosome"/>
</dbReference>
<dbReference type="GO" id="GO:0006935">
    <property type="term" value="P:chemotaxis"/>
    <property type="evidence" value="ECO:0007669"/>
    <property type="project" value="UniProtKB-KW"/>
</dbReference>
<dbReference type="InterPro" id="IPR007381">
    <property type="entry name" value="CheF1/F2"/>
</dbReference>
<dbReference type="PANTHER" id="PTHR42201">
    <property type="entry name" value="TAXIS PROTEIN"/>
    <property type="match status" value="1"/>
</dbReference>
<dbReference type="PANTHER" id="PTHR42201:SF1">
    <property type="entry name" value="TAXIS PROTEIN"/>
    <property type="match status" value="1"/>
</dbReference>
<dbReference type="Pfam" id="PF04283">
    <property type="entry name" value="CheF-arch"/>
    <property type="match status" value="1"/>
</dbReference>
<dbReference type="PIRSF" id="PIRSF026802">
    <property type="entry name" value="UCP026802"/>
    <property type="match status" value="1"/>
</dbReference>
<organism>
    <name type="scientific">Halobacterium salinarum (strain ATCC 29341 / DSM 671 / R1)</name>
    <dbReference type="NCBI Taxonomy" id="478009"/>
    <lineage>
        <taxon>Archaea</taxon>
        <taxon>Methanobacteriati</taxon>
        <taxon>Methanobacteriota</taxon>
        <taxon>Stenosarchaea group</taxon>
        <taxon>Halobacteria</taxon>
        <taxon>Halobacteriales</taxon>
        <taxon>Halobacteriaceae</taxon>
        <taxon>Halobacterium</taxon>
        <taxon>Halobacterium salinarum NRC-34001</taxon>
    </lineage>
</organism>
<keyword id="KW-0145">Chemotaxis</keyword>